<gene>
    <name evidence="1" type="primary">pth</name>
    <name type="ordered locus">MLBr00244</name>
</gene>
<accession>B8ZU62</accession>
<feature type="chain" id="PRO_1000118402" description="Peptidyl-tRNA hydrolase">
    <location>
        <begin position="1"/>
        <end position="199"/>
    </location>
</feature>
<feature type="active site" description="Proton acceptor" evidence="1">
    <location>
        <position position="30"/>
    </location>
</feature>
<feature type="binding site" evidence="1">
    <location>
        <position position="25"/>
    </location>
    <ligand>
        <name>tRNA</name>
        <dbReference type="ChEBI" id="CHEBI:17843"/>
    </ligand>
</feature>
<feature type="binding site" evidence="1">
    <location>
        <position position="76"/>
    </location>
    <ligand>
        <name>tRNA</name>
        <dbReference type="ChEBI" id="CHEBI:17843"/>
    </ligand>
</feature>
<feature type="binding site" evidence="1">
    <location>
        <position position="78"/>
    </location>
    <ligand>
        <name>tRNA</name>
        <dbReference type="ChEBI" id="CHEBI:17843"/>
    </ligand>
</feature>
<feature type="binding site" evidence="1">
    <location>
        <position position="124"/>
    </location>
    <ligand>
        <name>tRNA</name>
        <dbReference type="ChEBI" id="CHEBI:17843"/>
    </ligand>
</feature>
<feature type="site" description="Discriminates between blocked and unblocked aminoacyl-tRNA" evidence="1">
    <location>
        <position position="20"/>
    </location>
</feature>
<feature type="site" description="Stabilizes the basic form of H active site to accept a proton" evidence="1">
    <location>
        <position position="103"/>
    </location>
</feature>
<sequence length="199" mass="21438">MAEPTLASGWYPRLVVGLGNPGKNYGRTRHNVGFMVANLLAVRLGSKFEVHKRSGADVVNGRLAGCSMLVAKPRNYMNESGQQVGLLAKLYSVTPADIIIVHDDLDLDFGRIRLKLGGGEGGHNGLRSVAAALGTKDFQRVRIGIGRPTGRKDPASFVLENFTTAERMQVPTICKRAADATELLVGLGLEPAQNHVHAW</sequence>
<evidence type="ECO:0000255" key="1">
    <source>
        <dbReference type="HAMAP-Rule" id="MF_00083"/>
    </source>
</evidence>
<comment type="function">
    <text evidence="1">Hydrolyzes ribosome-free peptidyl-tRNAs (with 1 or more amino acids incorporated), which drop off the ribosome during protein synthesis, or as a result of ribosome stalling.</text>
</comment>
<comment type="function">
    <text evidence="1">Catalyzes the release of premature peptidyl moieties from peptidyl-tRNA molecules trapped in stalled 50S ribosomal subunits, and thus maintains levels of free tRNAs and 50S ribosomes.</text>
</comment>
<comment type="catalytic activity">
    <reaction evidence="1">
        <text>an N-acyl-L-alpha-aminoacyl-tRNA + H2O = an N-acyl-L-amino acid + a tRNA + H(+)</text>
        <dbReference type="Rhea" id="RHEA:54448"/>
        <dbReference type="Rhea" id="RHEA-COMP:10123"/>
        <dbReference type="Rhea" id="RHEA-COMP:13883"/>
        <dbReference type="ChEBI" id="CHEBI:15377"/>
        <dbReference type="ChEBI" id="CHEBI:15378"/>
        <dbReference type="ChEBI" id="CHEBI:59874"/>
        <dbReference type="ChEBI" id="CHEBI:78442"/>
        <dbReference type="ChEBI" id="CHEBI:138191"/>
        <dbReference type="EC" id="3.1.1.29"/>
    </reaction>
</comment>
<comment type="subunit">
    <text evidence="1">Monomer.</text>
</comment>
<comment type="subcellular location">
    <subcellularLocation>
        <location evidence="1">Cytoplasm</location>
    </subcellularLocation>
</comment>
<comment type="similarity">
    <text evidence="1">Belongs to the PTH family.</text>
</comment>
<organism>
    <name type="scientific">Mycobacterium leprae (strain Br4923)</name>
    <dbReference type="NCBI Taxonomy" id="561304"/>
    <lineage>
        <taxon>Bacteria</taxon>
        <taxon>Bacillati</taxon>
        <taxon>Actinomycetota</taxon>
        <taxon>Actinomycetes</taxon>
        <taxon>Mycobacteriales</taxon>
        <taxon>Mycobacteriaceae</taxon>
        <taxon>Mycobacterium</taxon>
    </lineage>
</organism>
<reference key="1">
    <citation type="journal article" date="2009" name="Nat. Genet.">
        <title>Comparative genomic and phylogeographic analysis of Mycobacterium leprae.</title>
        <authorList>
            <person name="Monot M."/>
            <person name="Honore N."/>
            <person name="Garnier T."/>
            <person name="Zidane N."/>
            <person name="Sherafi D."/>
            <person name="Paniz-Mondolfi A."/>
            <person name="Matsuoka M."/>
            <person name="Taylor G.M."/>
            <person name="Donoghue H.D."/>
            <person name="Bouwman A."/>
            <person name="Mays S."/>
            <person name="Watson C."/>
            <person name="Lockwood D."/>
            <person name="Khamispour A."/>
            <person name="Dowlati Y."/>
            <person name="Jianping S."/>
            <person name="Rea T.H."/>
            <person name="Vera-Cabrera L."/>
            <person name="Stefani M.M."/>
            <person name="Banu S."/>
            <person name="Macdonald M."/>
            <person name="Sapkota B.R."/>
            <person name="Spencer J.S."/>
            <person name="Thomas J."/>
            <person name="Harshman K."/>
            <person name="Singh P."/>
            <person name="Busso P."/>
            <person name="Gattiker A."/>
            <person name="Rougemont J."/>
            <person name="Brennan P.J."/>
            <person name="Cole S.T."/>
        </authorList>
    </citation>
    <scope>NUCLEOTIDE SEQUENCE [LARGE SCALE GENOMIC DNA]</scope>
    <source>
        <strain>Br4923</strain>
    </source>
</reference>
<proteinExistence type="inferred from homology"/>
<dbReference type="EC" id="3.1.1.29" evidence="1"/>
<dbReference type="EMBL" id="FM211192">
    <property type="protein sequence ID" value="CAR70337.1"/>
    <property type="molecule type" value="Genomic_DNA"/>
</dbReference>
<dbReference type="SMR" id="B8ZU62"/>
<dbReference type="KEGG" id="mlb:MLBr00244"/>
<dbReference type="HOGENOM" id="CLU_062456_2_2_11"/>
<dbReference type="Proteomes" id="UP000006900">
    <property type="component" value="Chromosome"/>
</dbReference>
<dbReference type="GO" id="GO:0005737">
    <property type="term" value="C:cytoplasm"/>
    <property type="evidence" value="ECO:0007669"/>
    <property type="project" value="UniProtKB-SubCell"/>
</dbReference>
<dbReference type="GO" id="GO:0004045">
    <property type="term" value="F:peptidyl-tRNA hydrolase activity"/>
    <property type="evidence" value="ECO:0007669"/>
    <property type="project" value="UniProtKB-UniRule"/>
</dbReference>
<dbReference type="GO" id="GO:0000049">
    <property type="term" value="F:tRNA binding"/>
    <property type="evidence" value="ECO:0007669"/>
    <property type="project" value="UniProtKB-UniRule"/>
</dbReference>
<dbReference type="GO" id="GO:0006515">
    <property type="term" value="P:protein quality control for misfolded or incompletely synthesized proteins"/>
    <property type="evidence" value="ECO:0007669"/>
    <property type="project" value="UniProtKB-UniRule"/>
</dbReference>
<dbReference type="GO" id="GO:0072344">
    <property type="term" value="P:rescue of stalled ribosome"/>
    <property type="evidence" value="ECO:0007669"/>
    <property type="project" value="UniProtKB-UniRule"/>
</dbReference>
<dbReference type="CDD" id="cd00462">
    <property type="entry name" value="PTH"/>
    <property type="match status" value="1"/>
</dbReference>
<dbReference type="FunFam" id="3.40.50.1470:FF:000001">
    <property type="entry name" value="Peptidyl-tRNA hydrolase"/>
    <property type="match status" value="1"/>
</dbReference>
<dbReference type="Gene3D" id="3.40.50.1470">
    <property type="entry name" value="Peptidyl-tRNA hydrolase"/>
    <property type="match status" value="1"/>
</dbReference>
<dbReference type="HAMAP" id="MF_00083">
    <property type="entry name" value="Pept_tRNA_hydro_bact"/>
    <property type="match status" value="1"/>
</dbReference>
<dbReference type="InterPro" id="IPR001328">
    <property type="entry name" value="Pept_tRNA_hydro"/>
</dbReference>
<dbReference type="InterPro" id="IPR018171">
    <property type="entry name" value="Pept_tRNA_hydro_CS"/>
</dbReference>
<dbReference type="InterPro" id="IPR036416">
    <property type="entry name" value="Pept_tRNA_hydro_sf"/>
</dbReference>
<dbReference type="NCBIfam" id="TIGR00447">
    <property type="entry name" value="pth"/>
    <property type="match status" value="1"/>
</dbReference>
<dbReference type="PANTHER" id="PTHR17224">
    <property type="entry name" value="PEPTIDYL-TRNA HYDROLASE"/>
    <property type="match status" value="1"/>
</dbReference>
<dbReference type="PANTHER" id="PTHR17224:SF1">
    <property type="entry name" value="PEPTIDYL-TRNA HYDROLASE"/>
    <property type="match status" value="1"/>
</dbReference>
<dbReference type="Pfam" id="PF01195">
    <property type="entry name" value="Pept_tRNA_hydro"/>
    <property type="match status" value="1"/>
</dbReference>
<dbReference type="SUPFAM" id="SSF53178">
    <property type="entry name" value="Peptidyl-tRNA hydrolase-like"/>
    <property type="match status" value="1"/>
</dbReference>
<dbReference type="PROSITE" id="PS01195">
    <property type="entry name" value="PEPT_TRNA_HYDROL_1"/>
    <property type="match status" value="1"/>
</dbReference>
<dbReference type="PROSITE" id="PS01196">
    <property type="entry name" value="PEPT_TRNA_HYDROL_2"/>
    <property type="match status" value="1"/>
</dbReference>
<protein>
    <recommendedName>
        <fullName evidence="1">Peptidyl-tRNA hydrolase</fullName>
        <shortName evidence="1">Pth</shortName>
        <ecNumber evidence="1">3.1.1.29</ecNumber>
    </recommendedName>
</protein>
<name>PTH_MYCLB</name>
<keyword id="KW-0963">Cytoplasm</keyword>
<keyword id="KW-0378">Hydrolase</keyword>
<keyword id="KW-0694">RNA-binding</keyword>
<keyword id="KW-0820">tRNA-binding</keyword>